<accession>Q89A91</accession>
<evidence type="ECO:0000255" key="1">
    <source>
        <dbReference type="HAMAP-Rule" id="MF_00659"/>
    </source>
</evidence>
<name>Y432_BUCBP</name>
<reference key="1">
    <citation type="journal article" date="2003" name="Proc. Natl. Acad. Sci. U.S.A.">
        <title>Reductive genome evolution in Buchnera aphidicola.</title>
        <authorList>
            <person name="van Ham R.C.H.J."/>
            <person name="Kamerbeek J."/>
            <person name="Palacios C."/>
            <person name="Rausell C."/>
            <person name="Abascal F."/>
            <person name="Bastolla U."/>
            <person name="Fernandez J.M."/>
            <person name="Jimenez L."/>
            <person name="Postigo M."/>
            <person name="Silva F.J."/>
            <person name="Tamames J."/>
            <person name="Viguera E."/>
            <person name="Latorre A."/>
            <person name="Valencia A."/>
            <person name="Moran F."/>
            <person name="Moya A."/>
        </authorList>
    </citation>
    <scope>NUCLEOTIDE SEQUENCE [LARGE SCALE GENOMIC DNA]</scope>
    <source>
        <strain>Bp</strain>
    </source>
</reference>
<dbReference type="EMBL" id="AE016826">
    <property type="protein sequence ID" value="AAO27141.1"/>
    <property type="molecule type" value="Genomic_DNA"/>
</dbReference>
<dbReference type="RefSeq" id="WP_011091542.1">
    <property type="nucleotide sequence ID" value="NC_004545.1"/>
</dbReference>
<dbReference type="SMR" id="Q89A91"/>
<dbReference type="STRING" id="224915.bbp_432"/>
<dbReference type="KEGG" id="bab:bbp_432"/>
<dbReference type="eggNOG" id="COG2921">
    <property type="taxonomic scope" value="Bacteria"/>
</dbReference>
<dbReference type="HOGENOM" id="CLU_161438_2_1_6"/>
<dbReference type="OrthoDB" id="9793424at2"/>
<dbReference type="Proteomes" id="UP000000601">
    <property type="component" value="Chromosome"/>
</dbReference>
<dbReference type="GO" id="GO:0005829">
    <property type="term" value="C:cytosol"/>
    <property type="evidence" value="ECO:0007669"/>
    <property type="project" value="TreeGrafter"/>
</dbReference>
<dbReference type="Gene3D" id="3.30.70.260">
    <property type="match status" value="1"/>
</dbReference>
<dbReference type="HAMAP" id="MF_00659">
    <property type="entry name" value="UPF0250"/>
    <property type="match status" value="1"/>
</dbReference>
<dbReference type="InterPro" id="IPR007454">
    <property type="entry name" value="UPF0250_YbeD-like"/>
</dbReference>
<dbReference type="InterPro" id="IPR027471">
    <property type="entry name" value="YbeD-like_sf"/>
</dbReference>
<dbReference type="NCBIfam" id="NF003447">
    <property type="entry name" value="PRK04998.1"/>
    <property type="match status" value="1"/>
</dbReference>
<dbReference type="PANTHER" id="PTHR38036">
    <property type="entry name" value="UPF0250 PROTEIN YBED"/>
    <property type="match status" value="1"/>
</dbReference>
<dbReference type="PANTHER" id="PTHR38036:SF1">
    <property type="entry name" value="UPF0250 PROTEIN YBED"/>
    <property type="match status" value="1"/>
</dbReference>
<dbReference type="Pfam" id="PF04359">
    <property type="entry name" value="DUF493"/>
    <property type="match status" value="1"/>
</dbReference>
<dbReference type="SUPFAM" id="SSF117991">
    <property type="entry name" value="YbeD/HP0495-like"/>
    <property type="match status" value="1"/>
</dbReference>
<comment type="similarity">
    <text evidence="1">Belongs to the UPF0250 family.</text>
</comment>
<protein>
    <recommendedName>
        <fullName evidence="1">UPF0250 protein bbp_432</fullName>
    </recommendedName>
</protein>
<gene>
    <name type="ordered locus">bbp_432</name>
</gene>
<organism>
    <name type="scientific">Buchnera aphidicola subsp. Baizongia pistaciae (strain Bp)</name>
    <dbReference type="NCBI Taxonomy" id="224915"/>
    <lineage>
        <taxon>Bacteria</taxon>
        <taxon>Pseudomonadati</taxon>
        <taxon>Pseudomonadota</taxon>
        <taxon>Gammaproteobacteria</taxon>
        <taxon>Enterobacterales</taxon>
        <taxon>Erwiniaceae</taxon>
        <taxon>Buchnera</taxon>
    </lineage>
</organism>
<proteinExistence type="inferred from homology"/>
<feature type="chain" id="PRO_0000209294" description="UPF0250 protein bbp_432">
    <location>
        <begin position="1"/>
        <end position="88"/>
    </location>
</feature>
<keyword id="KW-1185">Reference proteome</keyword>
<sequence>MRKNKLEKMLKFPCLFTYKVIGLAQPELVDKIVKIIQCKLPGDYVPQIKSSNKGNYLSISITICANTFEEIESLYYELSNINIVRMVL</sequence>